<keyword id="KW-0053">Apoptosis</keyword>
<keyword id="KW-0963">Cytoplasm</keyword>
<keyword id="KW-0430">Lectin</keyword>
<keyword id="KW-0539">Nucleus</keyword>
<keyword id="KW-1185">Reference proteome</keyword>
<keyword id="KW-0964">Secreted</keyword>
<organism>
    <name type="scientific">Rattus norvegicus</name>
    <name type="common">Rat</name>
    <dbReference type="NCBI Taxonomy" id="10116"/>
    <lineage>
        <taxon>Eukaryota</taxon>
        <taxon>Metazoa</taxon>
        <taxon>Chordata</taxon>
        <taxon>Craniata</taxon>
        <taxon>Vertebrata</taxon>
        <taxon>Euteleostomi</taxon>
        <taxon>Mammalia</taxon>
        <taxon>Eutheria</taxon>
        <taxon>Euarchontoglires</taxon>
        <taxon>Glires</taxon>
        <taxon>Rodentia</taxon>
        <taxon>Myomorpha</taxon>
        <taxon>Muroidea</taxon>
        <taxon>Muridae</taxon>
        <taxon>Murinae</taxon>
        <taxon>Rattus</taxon>
    </lineage>
</organism>
<evidence type="ECO:0000250" key="1"/>
<evidence type="ECO:0000255" key="2"/>
<evidence type="ECO:0000255" key="3">
    <source>
        <dbReference type="PROSITE-ProRule" id="PRU00639"/>
    </source>
</evidence>
<evidence type="ECO:0000305" key="4"/>
<sequence>MSATHHKTPLPQGVRLGTVMRIRGVVPDQAGRFHVNLLCGEEQEADAALHFNPRLDTSEVVFNTKQQGKWGREERGTGIPFQRGQPFEVLIITTEEGFKTVIGDDEYLHFHHRMPSSNVRSVEVGGDVQLHSVKIF</sequence>
<reference key="1">
    <citation type="submission" date="1997-01" db="EMBL/GenBank/DDBJ databases">
        <authorList>
            <person name="Lu J.X."/>
        </authorList>
    </citation>
    <scope>NUCLEOTIDE SEQUENCE [MRNA]</scope>
    <source>
        <strain>Sprague-Dawley</strain>
        <tissue>Mammary gland</tissue>
    </source>
</reference>
<reference key="2">
    <citation type="journal article" date="1998" name="Differentiation">
        <title>Galectin-7, a marker of all types of stratified epithelia.</title>
        <authorList>
            <person name="Magnaldo T."/>
            <person name="Fowlis D."/>
            <person name="Darmon M."/>
        </authorList>
    </citation>
    <scope>NUCLEOTIDE SEQUENCE [MRNA]</scope>
    <source>
        <strain>Fischer</strain>
    </source>
</reference>
<accession>P97590</accession>
<accession>O54958</accession>
<name>LEG7_RAT</name>
<protein>
    <recommendedName>
        <fullName>Galectin-7</fullName>
        <shortName>Gal-7</shortName>
    </recommendedName>
</protein>
<gene>
    <name type="primary">Lgals7</name>
</gene>
<dbReference type="EMBL" id="U67883">
    <property type="protein sequence ID" value="AAB40658.1"/>
    <property type="molecule type" value="mRNA"/>
</dbReference>
<dbReference type="EMBL" id="AF036941">
    <property type="protein sequence ID" value="AAB88871.1"/>
    <property type="molecule type" value="mRNA"/>
</dbReference>
<dbReference type="RefSeq" id="NP_072104.2">
    <property type="nucleotide sequence ID" value="NM_022582.2"/>
</dbReference>
<dbReference type="RefSeq" id="XP_006228732.1">
    <property type="nucleotide sequence ID" value="XM_006228670.3"/>
</dbReference>
<dbReference type="RefSeq" id="XP_038965433.1">
    <property type="nucleotide sequence ID" value="XM_039109505.2"/>
</dbReference>
<dbReference type="RefSeq" id="XP_038965437.1">
    <property type="nucleotide sequence ID" value="XM_039109509.2"/>
</dbReference>
<dbReference type="SMR" id="P97590"/>
<dbReference type="FunCoup" id="P97590">
    <property type="interactions" value="47"/>
</dbReference>
<dbReference type="STRING" id="10116.ENSRNOP00000068607"/>
<dbReference type="PhosphoSitePlus" id="P97590"/>
<dbReference type="PaxDb" id="10116-ENSRNOP00000027620"/>
<dbReference type="Ensembl" id="ENSRNOT00000027620.6">
    <property type="protein sequence ID" value="ENSRNOP00000027620.5"/>
    <property type="gene ID" value="ENSRNOG00000020380.6"/>
</dbReference>
<dbReference type="GeneID" id="29518"/>
<dbReference type="KEGG" id="rno:29518"/>
<dbReference type="UCSC" id="RGD:61951">
    <property type="organism name" value="rat"/>
</dbReference>
<dbReference type="AGR" id="RGD:61951"/>
<dbReference type="CTD" id="3963"/>
<dbReference type="RGD" id="61951">
    <property type="gene designation" value="Lgals7"/>
</dbReference>
<dbReference type="eggNOG" id="KOG3587">
    <property type="taxonomic scope" value="Eukaryota"/>
</dbReference>
<dbReference type="GeneTree" id="ENSGT00940000155398"/>
<dbReference type="HOGENOM" id="CLU_037794_3_3_1"/>
<dbReference type="InParanoid" id="P97590"/>
<dbReference type="OrthoDB" id="6251307at2759"/>
<dbReference type="PhylomeDB" id="P97590"/>
<dbReference type="PRO" id="PR:P97590"/>
<dbReference type="Proteomes" id="UP000002494">
    <property type="component" value="Chromosome 1"/>
</dbReference>
<dbReference type="Bgee" id="ENSRNOG00000020380">
    <property type="expression patterns" value="Expressed in esophagus and 17 other cell types or tissues"/>
</dbReference>
<dbReference type="ExpressionAtlas" id="P97590">
    <property type="expression patterns" value="baseline and differential"/>
</dbReference>
<dbReference type="GO" id="GO:0001533">
    <property type="term" value="C:cornified envelope"/>
    <property type="evidence" value="ECO:0000266"/>
    <property type="project" value="RGD"/>
</dbReference>
<dbReference type="GO" id="GO:0005737">
    <property type="term" value="C:cytoplasm"/>
    <property type="evidence" value="ECO:0007669"/>
    <property type="project" value="UniProtKB-SubCell"/>
</dbReference>
<dbReference type="GO" id="GO:0005576">
    <property type="term" value="C:extracellular region"/>
    <property type="evidence" value="ECO:0007669"/>
    <property type="project" value="UniProtKB-SubCell"/>
</dbReference>
<dbReference type="GO" id="GO:0005634">
    <property type="term" value="C:nucleus"/>
    <property type="evidence" value="ECO:0007669"/>
    <property type="project" value="UniProtKB-SubCell"/>
</dbReference>
<dbReference type="GO" id="GO:0030246">
    <property type="term" value="F:carbohydrate binding"/>
    <property type="evidence" value="ECO:0000318"/>
    <property type="project" value="GO_Central"/>
</dbReference>
<dbReference type="GO" id="GO:0006915">
    <property type="term" value="P:apoptotic process"/>
    <property type="evidence" value="ECO:0007669"/>
    <property type="project" value="UniProtKB-KW"/>
</dbReference>
<dbReference type="CDD" id="cd00070">
    <property type="entry name" value="GLECT"/>
    <property type="match status" value="1"/>
</dbReference>
<dbReference type="FunFam" id="2.60.120.200:FF:000021">
    <property type="entry name" value="Galectin"/>
    <property type="match status" value="1"/>
</dbReference>
<dbReference type="Gene3D" id="2.60.120.200">
    <property type="match status" value="1"/>
</dbReference>
<dbReference type="InterPro" id="IPR013320">
    <property type="entry name" value="ConA-like_dom_sf"/>
</dbReference>
<dbReference type="InterPro" id="IPR044156">
    <property type="entry name" value="Galectin-like"/>
</dbReference>
<dbReference type="InterPro" id="IPR001079">
    <property type="entry name" value="Galectin_CRD"/>
</dbReference>
<dbReference type="PANTHER" id="PTHR11346">
    <property type="entry name" value="GALECTIN"/>
    <property type="match status" value="1"/>
</dbReference>
<dbReference type="PANTHER" id="PTHR11346:SF107">
    <property type="entry name" value="GALECTIN-7"/>
    <property type="match status" value="1"/>
</dbReference>
<dbReference type="Pfam" id="PF00337">
    <property type="entry name" value="Gal-bind_lectin"/>
    <property type="match status" value="1"/>
</dbReference>
<dbReference type="SMART" id="SM00908">
    <property type="entry name" value="Gal-bind_lectin"/>
    <property type="match status" value="1"/>
</dbReference>
<dbReference type="SMART" id="SM00276">
    <property type="entry name" value="GLECT"/>
    <property type="match status" value="1"/>
</dbReference>
<dbReference type="SUPFAM" id="SSF49899">
    <property type="entry name" value="Concanavalin A-like lectins/glucanases"/>
    <property type="match status" value="1"/>
</dbReference>
<dbReference type="PROSITE" id="PS51304">
    <property type="entry name" value="GALECTIN"/>
    <property type="match status" value="1"/>
</dbReference>
<feature type="chain" id="PRO_0000076942" description="Galectin-7">
    <location>
        <begin position="1"/>
        <end position="136"/>
    </location>
</feature>
<feature type="domain" description="Galectin" evidence="3">
    <location>
        <begin position="6"/>
        <end position="136"/>
    </location>
</feature>
<feature type="binding site" evidence="2">
    <location>
        <begin position="70"/>
        <end position="76"/>
    </location>
    <ligand>
        <name>a beta-D-galactoside</name>
        <dbReference type="ChEBI" id="CHEBI:28034"/>
    </ligand>
</feature>
<feature type="sequence conflict" description="In Ref. 2." evidence="4" ref="2">
    <original>SATH</original>
    <variation>M</variation>
    <location>
        <begin position="2"/>
        <end position="5"/>
    </location>
</feature>
<feature type="sequence conflict" description="In Ref. 1; AAB40658." evidence="4" ref="1">
    <original>A</original>
    <variation>C</variation>
    <location>
        <position position="47"/>
    </location>
</feature>
<proteinExistence type="evidence at transcript level"/>
<comment type="function">
    <text evidence="1">Could be involved in cell-cell and/or cell-matrix interactions necessary for normal growth control. Pro-apoptotic protein that functions intracellularly upstream of JNK activation and cytochrome c release (By similarity).</text>
</comment>
<comment type="subunit">
    <text evidence="1">Monomer.</text>
</comment>
<comment type="subcellular location">
    <subcellularLocation>
        <location evidence="1">Cytoplasm</location>
    </subcellularLocation>
    <subcellularLocation>
        <location evidence="1">Nucleus</location>
    </subcellularLocation>
    <subcellularLocation>
        <location evidence="1">Secreted</location>
    </subcellularLocation>
    <text evidence="1">May be secreted by a non-classical secretory pathway.</text>
</comment>